<organism>
    <name type="scientific">Amycolatopsis orientalis</name>
    <name type="common">Nocardia orientalis</name>
    <dbReference type="NCBI Taxonomy" id="31958"/>
    <lineage>
        <taxon>Bacteria</taxon>
        <taxon>Bacillati</taxon>
        <taxon>Actinomycetota</taxon>
        <taxon>Actinomycetes</taxon>
        <taxon>Pseudonocardiales</taxon>
        <taxon>Pseudonocardiaceae</taxon>
        <taxon>Amycolatopsis</taxon>
    </lineage>
</organism>
<name>HMAS_AMYOR</name>
<evidence type="ECO:0000255" key="1">
    <source>
        <dbReference type="PROSITE-ProRule" id="PRU01163"/>
    </source>
</evidence>
<evidence type="ECO:0000269" key="2">
    <source>
    </source>
</evidence>
<evidence type="ECO:0000269" key="3">
    <source>
    </source>
</evidence>
<evidence type="ECO:0000269" key="4">
    <source>
    </source>
</evidence>
<evidence type="ECO:0000305" key="5"/>
<evidence type="ECO:0007829" key="6">
    <source>
        <dbReference type="PDB" id="2R5V"/>
    </source>
</evidence>
<keyword id="KW-0002">3D-structure</keyword>
<keyword id="KW-0045">Antibiotic biosynthesis</keyword>
<keyword id="KW-0408">Iron</keyword>
<keyword id="KW-0479">Metal-binding</keyword>
<keyword id="KW-0560">Oxidoreductase</keyword>
<keyword id="KW-0677">Repeat</keyword>
<sequence>MQNFEIDYVEMYVENLEVAAFSWVDKYAFAVAGTSRSADHRSIALRQGQVTLVLTEPTSDRHPAAAYLQTHGDGVADIAMATSDVAAAYEAAVRAGAEAVRAPGQHSEAAVTTATIGGFGDVVHTLIQRDGTSAELPPGFTGSMDVTNHGKGDVDLLGIDHFAICLNAGDLGPTVEYYERALGFRQIFDEHIVVGAQAMNSTVVQSASGAVTLTLIEPDRNADPGQIDEFLKDHQGAGVQHIAFNSNDAVRAVKALSERGVEFLKTPGAYYDLLGERITLQTHSLDDLRATNVLADEDHGGQLFQIFTASTHPRHTIFFEVIERQGAGTFGSSNIKALYEAVELERTGQSEFGAARR</sequence>
<proteinExistence type="evidence at protein level"/>
<comment type="function">
    <text evidence="2">Required to synthesize hydroxyphenylglycine, a recurring skeletal component of nonproteinogenic macrocyclic peptide antibiotics such as vancomycin. Catalyzes the conversion of p-hydroxyphenylpyruvate to p-hydroxymandelate. The decarboxylation and hydroxylation activities of HmaS show novel and distinct regioselectivity, compared to all other known p-hydroxyphenylpyruvate dioxygenases, by hydroxylating the benzylic position of the substrate instead of the phenyl ring.</text>
</comment>
<comment type="catalytic activity">
    <reaction evidence="2">
        <text>3-(4-hydroxyphenyl)pyruvate + O2 = (S)-4-hydroxymandelate + CO2</text>
        <dbReference type="Rhea" id="RHEA:21376"/>
        <dbReference type="ChEBI" id="CHEBI:15379"/>
        <dbReference type="ChEBI" id="CHEBI:16526"/>
        <dbReference type="ChEBI" id="CHEBI:17210"/>
        <dbReference type="ChEBI" id="CHEBI:36242"/>
        <dbReference type="EC" id="1.13.11.46"/>
    </reaction>
</comment>
<comment type="cofactor">
    <cofactor evidence="3">
        <name>Fe cation</name>
        <dbReference type="ChEBI" id="CHEBI:24875"/>
    </cofactor>
    <text evidence="3">Binds 1 Fe cation per subunit.</text>
</comment>
<comment type="pathway">
    <text evidence="4">Antibiotic biosynthesis; vancomycin biosynthesis.</text>
</comment>
<comment type="subunit">
    <text evidence="3">Monomer.</text>
</comment>
<comment type="similarity">
    <text evidence="5">Belongs to the 4HPPD family.</text>
</comment>
<dbReference type="EC" id="1.13.11.46"/>
<dbReference type="EMBL" id="AJ223998">
    <property type="protein sequence ID" value="CAA11761.1"/>
    <property type="molecule type" value="Genomic_DNA"/>
</dbReference>
<dbReference type="PIR" id="T17470">
    <property type="entry name" value="T17470"/>
</dbReference>
<dbReference type="PDB" id="2R5V">
    <property type="method" value="X-ray"/>
    <property type="resolution" value="2.30 A"/>
    <property type="chains" value="A/B=1-357"/>
</dbReference>
<dbReference type="PDBsum" id="2R5V"/>
<dbReference type="SMR" id="O52791"/>
<dbReference type="STRING" id="31958.SD37_33645"/>
<dbReference type="DrugBank" id="DB07896">
    <property type="generic name" value="(2S)-hydroxy(4-hydroxyphenyl)ethanoic acid"/>
</dbReference>
<dbReference type="KEGG" id="ag:CAA11761"/>
<dbReference type="BRENDA" id="1.1.3.46">
    <property type="organism ID" value="315"/>
</dbReference>
<dbReference type="UniPathway" id="UPA00162"/>
<dbReference type="EvolutionaryTrace" id="O52791"/>
<dbReference type="GO" id="GO:0050585">
    <property type="term" value="F:4-hydroxymandelate synthase activity"/>
    <property type="evidence" value="ECO:0000314"/>
    <property type="project" value="UniProtKB"/>
</dbReference>
<dbReference type="GO" id="GO:0003868">
    <property type="term" value="F:4-hydroxyphenylpyruvate dioxygenase activity"/>
    <property type="evidence" value="ECO:0007669"/>
    <property type="project" value="InterPro"/>
</dbReference>
<dbReference type="GO" id="GO:0005506">
    <property type="term" value="F:iron ion binding"/>
    <property type="evidence" value="ECO:0000314"/>
    <property type="project" value="UniProtKB"/>
</dbReference>
<dbReference type="GO" id="GO:0006572">
    <property type="term" value="P:tyrosine catabolic process"/>
    <property type="evidence" value="ECO:0007669"/>
    <property type="project" value="TreeGrafter"/>
</dbReference>
<dbReference type="GO" id="GO:0033072">
    <property type="term" value="P:vancomycin biosynthetic process"/>
    <property type="evidence" value="ECO:0000314"/>
    <property type="project" value="UniProtKB"/>
</dbReference>
<dbReference type="CDD" id="cd07250">
    <property type="entry name" value="HPPD_C_like"/>
    <property type="match status" value="1"/>
</dbReference>
<dbReference type="CDD" id="cd08342">
    <property type="entry name" value="HPPD_N_like"/>
    <property type="match status" value="1"/>
</dbReference>
<dbReference type="FunFam" id="3.10.180.10:FF:000041">
    <property type="entry name" value="4-hydroxymandelate synthase"/>
    <property type="match status" value="1"/>
</dbReference>
<dbReference type="Gene3D" id="3.10.180.10">
    <property type="entry name" value="2,3-Dihydroxybiphenyl 1,2-Dioxygenase, domain 1"/>
    <property type="match status" value="2"/>
</dbReference>
<dbReference type="InterPro" id="IPR005956">
    <property type="entry name" value="4OHPhenylPyrv_dOase"/>
</dbReference>
<dbReference type="InterPro" id="IPR041735">
    <property type="entry name" value="4OHPhenylPyrv_dOase_C"/>
</dbReference>
<dbReference type="InterPro" id="IPR041736">
    <property type="entry name" value="4OHPhenylPyrv_dOase_N"/>
</dbReference>
<dbReference type="InterPro" id="IPR029068">
    <property type="entry name" value="Glyas_Bleomycin-R_OHBP_Dase"/>
</dbReference>
<dbReference type="InterPro" id="IPR004360">
    <property type="entry name" value="Glyas_Fos-R_dOase_dom"/>
</dbReference>
<dbReference type="InterPro" id="IPR037523">
    <property type="entry name" value="VOC"/>
</dbReference>
<dbReference type="NCBIfam" id="TIGR01263">
    <property type="entry name" value="4HPPD"/>
    <property type="match status" value="1"/>
</dbReference>
<dbReference type="PANTHER" id="PTHR11959">
    <property type="entry name" value="4-HYDROXYPHENYLPYRUVATE DIOXYGENASE"/>
    <property type="match status" value="1"/>
</dbReference>
<dbReference type="PANTHER" id="PTHR11959:SF1">
    <property type="entry name" value="4-HYDROXYPHENYLPYRUVATE DIOXYGENASE"/>
    <property type="match status" value="1"/>
</dbReference>
<dbReference type="Pfam" id="PF00903">
    <property type="entry name" value="Glyoxalase"/>
    <property type="match status" value="1"/>
</dbReference>
<dbReference type="Pfam" id="PF14696">
    <property type="entry name" value="Glyoxalase_5"/>
    <property type="match status" value="1"/>
</dbReference>
<dbReference type="PIRSF" id="PIRSF009283">
    <property type="entry name" value="HPP_dOase"/>
    <property type="match status" value="1"/>
</dbReference>
<dbReference type="SUPFAM" id="SSF54593">
    <property type="entry name" value="Glyoxalase/Bleomycin resistance protein/Dihydroxybiphenyl dioxygenase"/>
    <property type="match status" value="1"/>
</dbReference>
<dbReference type="PROSITE" id="PS51819">
    <property type="entry name" value="VOC"/>
    <property type="match status" value="2"/>
</dbReference>
<accession>O52791</accession>
<reference key="1">
    <citation type="journal article" date="1998" name="Chem. Biol.">
        <title>Sequencing and analysis of genes involved in the biosynthesis of a vancomycin group antibiotic.</title>
        <authorList>
            <person name="van Wageningen A."/>
            <person name="Kirkpatrick P."/>
            <person name="Williams D."/>
            <person name="Harris B."/>
            <person name="Kershaw J."/>
            <person name="Lennard N."/>
            <person name="Jones M."/>
            <person name="Jones S."/>
            <person name="Solenberg P."/>
        </authorList>
    </citation>
    <scope>NUCLEOTIDE SEQUENCE [GENOMIC DNA]</scope>
    <scope>PATHWAY</scope>
</reference>
<reference key="2">
    <citation type="journal article" date="2000" name="Chem. Biol.">
        <title>Biosynthesis of L-p-hydroxyphenylglycine, a non-proteinogenic amino acid constituent of peptide antibiotics.</title>
        <authorList>
            <person name="Hubbard B.K."/>
            <person name="Thomas M.G."/>
            <person name="Walsh C.T."/>
        </authorList>
    </citation>
    <scope>FUNCTION IN THE BIOSYNTHESIS OF L-P-HYDROXYPHENYLGLYCINE AND AS A HYDROXYMANDELATE SYNTHASE</scope>
    <scope>CATALYTIC ACTIVITY</scope>
    <scope>NOMENCLATURE</scope>
</reference>
<reference key="3">
    <citation type="journal article" date="2008" name="Biochemistry">
        <title>Two roads diverged: the structure of hydroxymandelate synthase from Amycolatopsis orientalis in complex with 4-hydroxymandelate.</title>
        <authorList>
            <person name="Brownlee J."/>
            <person name="He P."/>
            <person name="Moran G.R."/>
            <person name="Harrison D.H."/>
        </authorList>
    </citation>
    <scope>X-RAY CRYSTALLOGRAPHY (2.30 ANGSTROMS) IN COMPLEX WITH SUBSTRATE AND METAL</scope>
    <scope>REACTION MECHANISM</scope>
    <scope>COFACTOR</scope>
    <scope>SUBUNIT</scope>
</reference>
<protein>
    <recommendedName>
        <fullName>4-hydroxymandelate synthase</fullName>
        <shortName>HMS</shortName>
        <shortName>HmaS</shortName>
        <ecNumber>1.13.11.46</ecNumber>
    </recommendedName>
    <alternativeName>
        <fullName>4-hydroxyphenylpyruvate dioxygenase II</fullName>
    </alternativeName>
</protein>
<feature type="chain" id="PRO_0000418534" description="4-hydroxymandelate synthase">
    <location>
        <begin position="1"/>
        <end position="357"/>
    </location>
</feature>
<feature type="domain" description="VOC 1" evidence="1">
    <location>
        <begin position="5"/>
        <end position="129"/>
    </location>
</feature>
<feature type="domain" description="VOC 2" evidence="1">
    <location>
        <begin position="158"/>
        <end position="309"/>
    </location>
</feature>
<feature type="binding site">
    <location>
        <position position="161"/>
    </location>
    <ligand>
        <name>Fe cation</name>
        <dbReference type="ChEBI" id="CHEBI:24875"/>
    </ligand>
</feature>
<feature type="binding site">
    <location>
        <position position="161"/>
    </location>
    <ligand>
        <name>substrate</name>
    </ligand>
</feature>
<feature type="binding site" evidence="3">
    <location>
        <position position="201"/>
    </location>
    <ligand>
        <name>substrate</name>
    </ligand>
</feature>
<feature type="binding site" evidence="3">
    <location>
        <position position="214"/>
    </location>
    <ligand>
        <name>substrate</name>
    </ligand>
</feature>
<feature type="binding site">
    <location>
        <position position="241"/>
    </location>
    <ligand>
        <name>Fe cation</name>
        <dbReference type="ChEBI" id="CHEBI:24875"/>
    </ligand>
</feature>
<feature type="binding site" evidence="3">
    <location>
        <position position="241"/>
    </location>
    <ligand>
        <name>substrate</name>
    </ligand>
</feature>
<feature type="binding site" evidence="3">
    <location>
        <position position="305"/>
    </location>
    <ligand>
        <name>substrate</name>
    </ligand>
</feature>
<feature type="binding site">
    <location>
        <position position="320"/>
    </location>
    <ligand>
        <name>Fe cation</name>
        <dbReference type="ChEBI" id="CHEBI:24875"/>
    </ligand>
</feature>
<feature type="strand" evidence="6">
    <location>
        <begin position="5"/>
        <end position="12"/>
    </location>
</feature>
<feature type="helix" evidence="6">
    <location>
        <begin position="16"/>
        <end position="27"/>
    </location>
</feature>
<feature type="strand" evidence="6">
    <location>
        <begin position="30"/>
        <end position="37"/>
    </location>
</feature>
<feature type="strand" evidence="6">
    <location>
        <begin position="40"/>
        <end position="47"/>
    </location>
</feature>
<feature type="strand" evidence="6">
    <location>
        <begin position="50"/>
        <end position="59"/>
    </location>
</feature>
<feature type="helix" evidence="6">
    <location>
        <begin position="64"/>
        <end position="71"/>
    </location>
</feature>
<feature type="strand" evidence="6">
    <location>
        <begin position="72"/>
        <end position="83"/>
    </location>
</feature>
<feature type="helix" evidence="6">
    <location>
        <begin position="85"/>
        <end position="94"/>
    </location>
</feature>
<feature type="strand" evidence="6">
    <location>
        <begin position="99"/>
        <end position="104"/>
    </location>
</feature>
<feature type="strand" evidence="6">
    <location>
        <begin position="113"/>
        <end position="117"/>
    </location>
</feature>
<feature type="strand" evidence="6">
    <location>
        <begin position="123"/>
        <end position="128"/>
    </location>
</feature>
<feature type="strand" evidence="6">
    <location>
        <begin position="131"/>
        <end position="133"/>
    </location>
</feature>
<feature type="strand" evidence="6">
    <location>
        <begin position="158"/>
        <end position="165"/>
    </location>
</feature>
<feature type="helix" evidence="6">
    <location>
        <begin position="171"/>
        <end position="182"/>
    </location>
</feature>
<feature type="strand" evidence="6">
    <location>
        <begin position="185"/>
        <end position="194"/>
    </location>
</feature>
<feature type="strand" evidence="6">
    <location>
        <begin position="197"/>
        <end position="205"/>
    </location>
</feature>
<feature type="strand" evidence="6">
    <location>
        <begin position="212"/>
        <end position="218"/>
    </location>
</feature>
<feature type="helix" evidence="6">
    <location>
        <begin position="226"/>
        <end position="234"/>
    </location>
</feature>
<feature type="strand" evidence="6">
    <location>
        <begin position="236"/>
        <end position="245"/>
    </location>
</feature>
<feature type="helix" evidence="6">
    <location>
        <begin position="249"/>
        <end position="258"/>
    </location>
</feature>
<feature type="helix" evidence="6">
    <location>
        <begin position="268"/>
        <end position="272"/>
    </location>
</feature>
<feature type="turn" evidence="6">
    <location>
        <begin position="273"/>
        <end position="277"/>
    </location>
</feature>
<feature type="strand" evidence="6">
    <location>
        <begin position="281"/>
        <end position="283"/>
    </location>
</feature>
<feature type="helix" evidence="6">
    <location>
        <begin position="285"/>
        <end position="291"/>
    </location>
</feature>
<feature type="strand" evidence="6">
    <location>
        <begin position="294"/>
        <end position="298"/>
    </location>
</feature>
<feature type="strand" evidence="6">
    <location>
        <begin position="301"/>
        <end position="308"/>
    </location>
</feature>
<feature type="strand" evidence="6">
    <location>
        <begin position="318"/>
        <end position="326"/>
    </location>
</feature>
<feature type="helix" evidence="6">
    <location>
        <begin position="332"/>
        <end position="347"/>
    </location>
</feature>